<accession>Q8NE18</accession>
<accession>C9JI19</accession>
<accession>Q8N9K8</accession>
<accession>Q9H815</accession>
<comment type="function">
    <text evidence="6">May have S-adenosyl-L-methionine-dependent methyl-transferase activity.</text>
</comment>
<comment type="alternative products">
    <event type="alternative splicing"/>
    <isoform>
        <id>Q8NE18-1</id>
        <name>1</name>
        <sequence type="displayed"/>
    </isoform>
    <isoform>
        <id>Q8NE18-2</id>
        <name>2</name>
        <sequence type="described" ref="VSP_025978 VSP_025979"/>
    </isoform>
    <isoform>
        <id>Q8NE18-3</id>
        <name>3</name>
        <sequence type="described" ref="VSP_025976 VSP_025977"/>
    </isoform>
</comment>
<comment type="similarity">
    <text evidence="1">Belongs to the class I-like SAM-binding methyltransferase superfamily. RsmB/NOP family.</text>
</comment>
<comment type="sequence caution" evidence="6">
    <conflict type="erroneous initiation">
        <sequence resource="EMBL-CDS" id="BAC04325"/>
    </conflict>
    <text>Truncated N-terminus.</text>
</comment>
<organism>
    <name type="scientific">Homo sapiens</name>
    <name type="common">Human</name>
    <dbReference type="NCBI Taxonomy" id="9606"/>
    <lineage>
        <taxon>Eukaryota</taxon>
        <taxon>Metazoa</taxon>
        <taxon>Chordata</taxon>
        <taxon>Craniata</taxon>
        <taxon>Vertebrata</taxon>
        <taxon>Euteleostomi</taxon>
        <taxon>Mammalia</taxon>
        <taxon>Eutheria</taxon>
        <taxon>Euarchontoglires</taxon>
        <taxon>Primates</taxon>
        <taxon>Haplorrhini</taxon>
        <taxon>Catarrhini</taxon>
        <taxon>Hominidae</taxon>
        <taxon>Homo</taxon>
    </lineage>
</organism>
<dbReference type="EC" id="2.1.1.-"/>
<dbReference type="EMBL" id="AK024063">
    <property type="protein sequence ID" value="BAB14808.1"/>
    <property type="molecule type" value="mRNA"/>
</dbReference>
<dbReference type="EMBL" id="AK094298">
    <property type="protein sequence ID" value="BAC04325.1"/>
    <property type="status" value="ALT_INIT"/>
    <property type="molecule type" value="mRNA"/>
</dbReference>
<dbReference type="EMBL" id="AC131953">
    <property type="status" value="NOT_ANNOTATED_CDS"/>
    <property type="molecule type" value="Genomic_DNA"/>
</dbReference>
<dbReference type="EMBL" id="BC036568">
    <property type="protein sequence ID" value="AAH36568.1"/>
    <property type="molecule type" value="mRNA"/>
</dbReference>
<dbReference type="CCDS" id="CCDS3461.2">
    <molecule id="Q8NE18-1"/>
</dbReference>
<dbReference type="CCDS" id="CCDS82917.1">
    <molecule id="Q8NE18-2"/>
</dbReference>
<dbReference type="RefSeq" id="NP_001317577.1">
    <molecule id="Q8NE18-2"/>
    <property type="nucleotide sequence ID" value="NM_001330648.3"/>
</dbReference>
<dbReference type="SMR" id="Q8NE18"/>
<dbReference type="FunCoup" id="Q8NE18">
    <property type="interactions" value="115"/>
</dbReference>
<dbReference type="IntAct" id="Q8NE18">
    <property type="interactions" value="2"/>
</dbReference>
<dbReference type="STRING" id="9606.ENSP00000371201"/>
<dbReference type="GlyGen" id="Q8NE18">
    <property type="glycosylation" value="1 site, 1 O-linked glycan (1 site)"/>
</dbReference>
<dbReference type="iPTMnet" id="Q8NE18"/>
<dbReference type="PhosphoSitePlus" id="Q8NE18"/>
<dbReference type="BioMuta" id="NSUN7"/>
<dbReference type="DMDM" id="313104313"/>
<dbReference type="jPOST" id="Q8NE18"/>
<dbReference type="MassIVE" id="Q8NE18"/>
<dbReference type="PaxDb" id="9606-ENSP00000371201"/>
<dbReference type="PeptideAtlas" id="Q8NE18"/>
<dbReference type="ProteomicsDB" id="73113">
    <molecule id="Q8NE18-1"/>
</dbReference>
<dbReference type="ProteomicsDB" id="73114">
    <molecule id="Q8NE18-2"/>
</dbReference>
<dbReference type="Antibodypedia" id="11775">
    <property type="antibodies" value="37 antibodies from 12 providers"/>
</dbReference>
<dbReference type="DNASU" id="79730"/>
<dbReference type="Ensembl" id="ENST00000316607.5">
    <molecule id="Q8NE18-2"/>
    <property type="protein sequence ID" value="ENSP00000319127.5"/>
    <property type="gene ID" value="ENSG00000179299.17"/>
</dbReference>
<dbReference type="Ensembl" id="ENST00000381782.7">
    <molecule id="Q8NE18-1"/>
    <property type="protein sequence ID" value="ENSP00000371201.2"/>
    <property type="gene ID" value="ENSG00000179299.17"/>
</dbReference>
<dbReference type="GeneID" id="79730"/>
<dbReference type="KEGG" id="hsa:79730"/>
<dbReference type="MANE-Select" id="ENST00000381782.7">
    <property type="protein sequence ID" value="ENSP00000371201.2"/>
    <property type="RefSeq nucleotide sequence ID" value="NM_024677.6"/>
    <property type="RefSeq protein sequence ID" value="NP_078953.4"/>
</dbReference>
<dbReference type="UCSC" id="uc003gvi.5">
    <molecule id="Q8NE18-1"/>
    <property type="organism name" value="human"/>
</dbReference>
<dbReference type="AGR" id="HGNC:25857"/>
<dbReference type="CTD" id="79730"/>
<dbReference type="DisGeNET" id="79730"/>
<dbReference type="GeneCards" id="NSUN7"/>
<dbReference type="HGNC" id="HGNC:25857">
    <property type="gene designation" value="NSUN7"/>
</dbReference>
<dbReference type="HPA" id="ENSG00000179299">
    <property type="expression patterns" value="Tissue enhanced (testis)"/>
</dbReference>
<dbReference type="MalaCards" id="NSUN7"/>
<dbReference type="neXtProt" id="NX_Q8NE18"/>
<dbReference type="OpenTargets" id="ENSG00000179299"/>
<dbReference type="VEuPathDB" id="HostDB:ENSG00000179299"/>
<dbReference type="eggNOG" id="KOG2360">
    <property type="taxonomic scope" value="Eukaryota"/>
</dbReference>
<dbReference type="GeneTree" id="ENSGT00940000157352"/>
<dbReference type="HOGENOM" id="CLU_023514_0_0_1"/>
<dbReference type="InParanoid" id="Q8NE18"/>
<dbReference type="OMA" id="QIPTQHF"/>
<dbReference type="OrthoDB" id="6817893at2759"/>
<dbReference type="PAN-GO" id="Q8NE18">
    <property type="GO annotations" value="0 GO annotations based on evolutionary models"/>
</dbReference>
<dbReference type="PhylomeDB" id="Q8NE18"/>
<dbReference type="TreeFam" id="TF314285"/>
<dbReference type="PathwayCommons" id="Q8NE18"/>
<dbReference type="SignaLink" id="Q8NE18"/>
<dbReference type="BioGRID-ORCS" id="79730">
    <property type="hits" value="12 hits in 1136 CRISPR screens"/>
</dbReference>
<dbReference type="ChiTaRS" id="NSUN7">
    <property type="organism name" value="human"/>
</dbReference>
<dbReference type="GenomeRNAi" id="79730"/>
<dbReference type="Pharos" id="Q8NE18">
    <property type="development level" value="Tdark"/>
</dbReference>
<dbReference type="PRO" id="PR:Q8NE18"/>
<dbReference type="Proteomes" id="UP000005640">
    <property type="component" value="Chromosome 4"/>
</dbReference>
<dbReference type="RNAct" id="Q8NE18">
    <property type="molecule type" value="protein"/>
</dbReference>
<dbReference type="Bgee" id="ENSG00000179299">
    <property type="expression patterns" value="Expressed in sperm and 124 other cell types or tissues"/>
</dbReference>
<dbReference type="GO" id="GO:0008168">
    <property type="term" value="F:methyltransferase activity"/>
    <property type="evidence" value="ECO:0007669"/>
    <property type="project" value="UniProtKB-KW"/>
</dbReference>
<dbReference type="GO" id="GO:0003723">
    <property type="term" value="F:RNA binding"/>
    <property type="evidence" value="ECO:0007669"/>
    <property type="project" value="UniProtKB-KW"/>
</dbReference>
<dbReference type="GO" id="GO:0001510">
    <property type="term" value="P:RNA methylation"/>
    <property type="evidence" value="ECO:0007669"/>
    <property type="project" value="UniProtKB-ARBA"/>
</dbReference>
<dbReference type="GO" id="GO:0006396">
    <property type="term" value="P:RNA processing"/>
    <property type="evidence" value="ECO:0007669"/>
    <property type="project" value="UniProtKB-ARBA"/>
</dbReference>
<dbReference type="Gene3D" id="3.30.70.1170">
    <property type="entry name" value="Sun protein, domain 3"/>
    <property type="match status" value="1"/>
</dbReference>
<dbReference type="Gene3D" id="3.40.50.150">
    <property type="entry name" value="Vaccinia Virus protein VP39"/>
    <property type="match status" value="1"/>
</dbReference>
<dbReference type="InterPro" id="IPR049560">
    <property type="entry name" value="MeTrfase_RsmB-F_NOP2_cat"/>
</dbReference>
<dbReference type="InterPro" id="IPR001678">
    <property type="entry name" value="MeTrfase_RsmB-F_NOP2_dom"/>
</dbReference>
<dbReference type="InterPro" id="IPR049561">
    <property type="entry name" value="NSUN5_7_fdxn-like"/>
</dbReference>
<dbReference type="InterPro" id="IPR042620">
    <property type="entry name" value="NSUN7"/>
</dbReference>
<dbReference type="InterPro" id="IPR029063">
    <property type="entry name" value="SAM-dependent_MTases_sf"/>
</dbReference>
<dbReference type="PANTHER" id="PTHR14663">
    <property type="entry name" value="METHYLTRANSFERASE NSUN7-RELATED"/>
    <property type="match status" value="1"/>
</dbReference>
<dbReference type="PANTHER" id="PTHR14663:SF2">
    <property type="entry name" value="METHYLTRANSFERASE NSUN7-RELATED"/>
    <property type="match status" value="1"/>
</dbReference>
<dbReference type="Pfam" id="PF01189">
    <property type="entry name" value="Methyltr_RsmB-F"/>
    <property type="match status" value="1"/>
</dbReference>
<dbReference type="Pfam" id="PF21148">
    <property type="entry name" value="NSUN5_fdxn-like"/>
    <property type="match status" value="1"/>
</dbReference>
<dbReference type="SUPFAM" id="SSF53335">
    <property type="entry name" value="S-adenosyl-L-methionine-dependent methyltransferases"/>
    <property type="match status" value="1"/>
</dbReference>
<dbReference type="PROSITE" id="PS51686">
    <property type="entry name" value="SAM_MT_RSMB_NOP"/>
    <property type="match status" value="1"/>
</dbReference>
<name>NSUN7_HUMAN</name>
<evidence type="ECO:0000255" key="1">
    <source>
        <dbReference type="PROSITE-ProRule" id="PRU01023"/>
    </source>
</evidence>
<evidence type="ECO:0000256" key="2">
    <source>
        <dbReference type="SAM" id="MobiDB-lite"/>
    </source>
</evidence>
<evidence type="ECO:0000269" key="3">
    <source>
    </source>
</evidence>
<evidence type="ECO:0000303" key="4">
    <source>
    </source>
</evidence>
<evidence type="ECO:0000303" key="5">
    <source>
    </source>
</evidence>
<evidence type="ECO:0000305" key="6"/>
<feature type="chain" id="PRO_0000289238" description="Putative methyltransferase NSUN7">
    <location>
        <begin position="1"/>
        <end position="718"/>
    </location>
</feature>
<feature type="region of interest" description="Disordered" evidence="2">
    <location>
        <begin position="536"/>
        <end position="557"/>
    </location>
</feature>
<feature type="region of interest" description="Disordered" evidence="2">
    <location>
        <begin position="578"/>
        <end position="616"/>
    </location>
</feature>
<feature type="region of interest" description="Disordered" evidence="2">
    <location>
        <begin position="694"/>
        <end position="718"/>
    </location>
</feature>
<feature type="compositionally biased region" description="Basic residues" evidence="2">
    <location>
        <begin position="538"/>
        <end position="549"/>
    </location>
</feature>
<feature type="compositionally biased region" description="Polar residues" evidence="2">
    <location>
        <begin position="591"/>
        <end position="604"/>
    </location>
</feature>
<feature type="compositionally biased region" description="Basic and acidic residues" evidence="2">
    <location>
        <begin position="696"/>
        <end position="706"/>
    </location>
</feature>
<feature type="active site" description="Nucleophile" evidence="1">
    <location>
        <position position="439"/>
    </location>
</feature>
<feature type="splice variant" id="VSP_025976" description="In isoform 3." evidence="4">
    <original>DK</original>
    <variation>VN</variation>
    <location>
        <begin position="276"/>
        <end position="277"/>
    </location>
</feature>
<feature type="splice variant" id="VSP_025977" description="In isoform 3." evidence="4">
    <location>
        <begin position="278"/>
        <end position="718"/>
    </location>
</feature>
<feature type="splice variant" id="VSP_025978" description="In isoform 2." evidence="5">
    <original>RLSPPVLPL</original>
    <variation>SGTLLRQCL</variation>
    <location>
        <begin position="467"/>
        <end position="475"/>
    </location>
</feature>
<feature type="splice variant" id="VSP_025979" description="In isoform 2." evidence="5">
    <location>
        <begin position="476"/>
        <end position="718"/>
    </location>
</feature>
<feature type="sequence variant" id="VAR_032610" description="In dbSNP:rs2437323." evidence="3">
    <original>S</original>
    <variation>A</variation>
    <location>
        <position position="308"/>
    </location>
</feature>
<feature type="sequence variant" id="VAR_059790" description="In dbSNP:rs4861066.">
    <original>T</original>
    <variation>A</variation>
    <location>
        <position position="622"/>
    </location>
</feature>
<feature type="sequence conflict" description="In Ref. 1; BAB14808." evidence="6" ref="1">
    <original>I</original>
    <variation>T</variation>
    <location>
        <position position="119"/>
    </location>
</feature>
<feature type="sequence conflict" description="In Ref. 1; BAC04325." evidence="6" ref="1">
    <original>K</original>
    <variation>E</variation>
    <location>
        <position position="650"/>
    </location>
</feature>
<sequence length="718" mass="81039">MLNSTGELEFSNEEDPEIISQLTSLPLSGGKSSAGVPEKTGYPDSVYVMAANIFQGIRIEKSAQKVLIKYGNEPLRSLSESEDQSFQRLSYELAFSALKYQDILETILIDSCIFPSTTIPDHLSSLIIVMLYDFQDRKFQTRVLSDNEEPISEVQEVENLLNSFKIKLAAALARCRIKHDALSIYHILPETVRKQELRASTLPLYAWINTCKISPEEVYNNLKRRGYNKVKSVLHIDDKVFAVDQHCYDVLIFPSHLKNDLINIDLFKDYKLIFQDKSRSLAVHSVKALLNMDDDVLMVNTGSWYTVSHMSILTNNNTSKVFVCGVQSQAKDPDLKTLFTKIGCKNIEILHEKFINIESKDHRLQKVKVILLLPRCSGLGVSNPVEFILNEHEDTEFLKDHSQGGISVDKLHVLAQQQYEQLTHAMKFTKAQAVVYCTCSVFPEENEAVVKKALEFQDLGNKGQPYRLSPPVLPLCSLKEIQLSTDKFFRMEPSEITNGCFLSILTRERDPSETVSVNDVLARAAAKGLLDGIELGKSSKREKKKKKSKTSLTKGATTDNGIQMKIAEFLNRETKASANLSETVTKPPLPQKNTAQVGASSQTRKPNKLAPHPAVPAFVKNTCPSRPRERQTHFLRPRPEDRMVALKPIKIVLPPVFMPFSSPQGIRSRMPTQHLYCRWVAPKALVPTCLPTHSLSRKEEKPKDDTPSSLLRPPRRWL</sequence>
<proteinExistence type="evidence at protein level"/>
<reference key="1">
    <citation type="journal article" date="2004" name="Nat. Genet.">
        <title>Complete sequencing and characterization of 21,243 full-length human cDNAs.</title>
        <authorList>
            <person name="Ota T."/>
            <person name="Suzuki Y."/>
            <person name="Nishikawa T."/>
            <person name="Otsuki T."/>
            <person name="Sugiyama T."/>
            <person name="Irie R."/>
            <person name="Wakamatsu A."/>
            <person name="Hayashi K."/>
            <person name="Sato H."/>
            <person name="Nagai K."/>
            <person name="Kimura K."/>
            <person name="Makita H."/>
            <person name="Sekine M."/>
            <person name="Obayashi M."/>
            <person name="Nishi T."/>
            <person name="Shibahara T."/>
            <person name="Tanaka T."/>
            <person name="Ishii S."/>
            <person name="Yamamoto J."/>
            <person name="Saito K."/>
            <person name="Kawai Y."/>
            <person name="Isono Y."/>
            <person name="Nakamura Y."/>
            <person name="Nagahari K."/>
            <person name="Murakami K."/>
            <person name="Yasuda T."/>
            <person name="Iwayanagi T."/>
            <person name="Wagatsuma M."/>
            <person name="Shiratori A."/>
            <person name="Sudo H."/>
            <person name="Hosoiri T."/>
            <person name="Kaku Y."/>
            <person name="Kodaira H."/>
            <person name="Kondo H."/>
            <person name="Sugawara M."/>
            <person name="Takahashi M."/>
            <person name="Kanda K."/>
            <person name="Yokoi T."/>
            <person name="Furuya T."/>
            <person name="Kikkawa E."/>
            <person name="Omura Y."/>
            <person name="Abe K."/>
            <person name="Kamihara K."/>
            <person name="Katsuta N."/>
            <person name="Sato K."/>
            <person name="Tanikawa M."/>
            <person name="Yamazaki M."/>
            <person name="Ninomiya K."/>
            <person name="Ishibashi T."/>
            <person name="Yamashita H."/>
            <person name="Murakawa K."/>
            <person name="Fujimori K."/>
            <person name="Tanai H."/>
            <person name="Kimata M."/>
            <person name="Watanabe M."/>
            <person name="Hiraoka S."/>
            <person name="Chiba Y."/>
            <person name="Ishida S."/>
            <person name="Ono Y."/>
            <person name="Takiguchi S."/>
            <person name="Watanabe S."/>
            <person name="Yosida M."/>
            <person name="Hotuta T."/>
            <person name="Kusano J."/>
            <person name="Kanehori K."/>
            <person name="Takahashi-Fujii A."/>
            <person name="Hara H."/>
            <person name="Tanase T.-O."/>
            <person name="Nomura Y."/>
            <person name="Togiya S."/>
            <person name="Komai F."/>
            <person name="Hara R."/>
            <person name="Takeuchi K."/>
            <person name="Arita M."/>
            <person name="Imose N."/>
            <person name="Musashino K."/>
            <person name="Yuuki H."/>
            <person name="Oshima A."/>
            <person name="Sasaki N."/>
            <person name="Aotsuka S."/>
            <person name="Yoshikawa Y."/>
            <person name="Matsunawa H."/>
            <person name="Ichihara T."/>
            <person name="Shiohata N."/>
            <person name="Sano S."/>
            <person name="Moriya S."/>
            <person name="Momiyama H."/>
            <person name="Satoh N."/>
            <person name="Takami S."/>
            <person name="Terashima Y."/>
            <person name="Suzuki O."/>
            <person name="Nakagawa S."/>
            <person name="Senoh A."/>
            <person name="Mizoguchi H."/>
            <person name="Goto Y."/>
            <person name="Shimizu F."/>
            <person name="Wakebe H."/>
            <person name="Hishigaki H."/>
            <person name="Watanabe T."/>
            <person name="Sugiyama A."/>
            <person name="Takemoto M."/>
            <person name="Kawakami B."/>
            <person name="Yamazaki M."/>
            <person name="Watanabe K."/>
            <person name="Kumagai A."/>
            <person name="Itakura S."/>
            <person name="Fukuzumi Y."/>
            <person name="Fujimori Y."/>
            <person name="Komiyama M."/>
            <person name="Tashiro H."/>
            <person name="Tanigami A."/>
            <person name="Fujiwara T."/>
            <person name="Ono T."/>
            <person name="Yamada K."/>
            <person name="Fujii Y."/>
            <person name="Ozaki K."/>
            <person name="Hirao M."/>
            <person name="Ohmori Y."/>
            <person name="Kawabata A."/>
            <person name="Hikiji T."/>
            <person name="Kobatake N."/>
            <person name="Inagaki H."/>
            <person name="Ikema Y."/>
            <person name="Okamoto S."/>
            <person name="Okitani R."/>
            <person name="Kawakami T."/>
            <person name="Noguchi S."/>
            <person name="Itoh T."/>
            <person name="Shigeta K."/>
            <person name="Senba T."/>
            <person name="Matsumura K."/>
            <person name="Nakajima Y."/>
            <person name="Mizuno T."/>
            <person name="Morinaga M."/>
            <person name="Sasaki M."/>
            <person name="Togashi T."/>
            <person name="Oyama M."/>
            <person name="Hata H."/>
            <person name="Watanabe M."/>
            <person name="Komatsu T."/>
            <person name="Mizushima-Sugano J."/>
            <person name="Satoh T."/>
            <person name="Shirai Y."/>
            <person name="Takahashi Y."/>
            <person name="Nakagawa K."/>
            <person name="Okumura K."/>
            <person name="Nagase T."/>
            <person name="Nomura N."/>
            <person name="Kikuchi H."/>
            <person name="Masuho Y."/>
            <person name="Yamashita R."/>
            <person name="Nakai K."/>
            <person name="Yada T."/>
            <person name="Nakamura Y."/>
            <person name="Ohara O."/>
            <person name="Isogai T."/>
            <person name="Sugano S."/>
        </authorList>
    </citation>
    <scope>NUCLEOTIDE SEQUENCE [LARGE SCALE MRNA] (ISOFORM 3)</scope>
    <scope>NUCLEOTIDE SEQUENCE [LARGE SCALE MRNA] OF 423-718 (ISOFORM 1)</scope>
    <source>
        <tissue>Cerebellum</tissue>
    </source>
</reference>
<reference key="2">
    <citation type="journal article" date="2005" name="Nature">
        <title>Generation and annotation of the DNA sequences of human chromosomes 2 and 4.</title>
        <authorList>
            <person name="Hillier L.W."/>
            <person name="Graves T.A."/>
            <person name="Fulton R.S."/>
            <person name="Fulton L.A."/>
            <person name="Pepin K.H."/>
            <person name="Minx P."/>
            <person name="Wagner-McPherson C."/>
            <person name="Layman D."/>
            <person name="Wylie K."/>
            <person name="Sekhon M."/>
            <person name="Becker M.C."/>
            <person name="Fewell G.A."/>
            <person name="Delehaunty K.D."/>
            <person name="Miner T.L."/>
            <person name="Nash W.E."/>
            <person name="Kremitzki C."/>
            <person name="Oddy L."/>
            <person name="Du H."/>
            <person name="Sun H."/>
            <person name="Bradshaw-Cordum H."/>
            <person name="Ali J."/>
            <person name="Carter J."/>
            <person name="Cordes M."/>
            <person name="Harris A."/>
            <person name="Isak A."/>
            <person name="van Brunt A."/>
            <person name="Nguyen C."/>
            <person name="Du F."/>
            <person name="Courtney L."/>
            <person name="Kalicki J."/>
            <person name="Ozersky P."/>
            <person name="Abbott S."/>
            <person name="Armstrong J."/>
            <person name="Belter E.A."/>
            <person name="Caruso L."/>
            <person name="Cedroni M."/>
            <person name="Cotton M."/>
            <person name="Davidson T."/>
            <person name="Desai A."/>
            <person name="Elliott G."/>
            <person name="Erb T."/>
            <person name="Fronick C."/>
            <person name="Gaige T."/>
            <person name="Haakenson W."/>
            <person name="Haglund K."/>
            <person name="Holmes A."/>
            <person name="Harkins R."/>
            <person name="Kim K."/>
            <person name="Kruchowski S.S."/>
            <person name="Strong C.M."/>
            <person name="Grewal N."/>
            <person name="Goyea E."/>
            <person name="Hou S."/>
            <person name="Levy A."/>
            <person name="Martinka S."/>
            <person name="Mead K."/>
            <person name="McLellan M.D."/>
            <person name="Meyer R."/>
            <person name="Randall-Maher J."/>
            <person name="Tomlinson C."/>
            <person name="Dauphin-Kohlberg S."/>
            <person name="Kozlowicz-Reilly A."/>
            <person name="Shah N."/>
            <person name="Swearengen-Shahid S."/>
            <person name="Snider J."/>
            <person name="Strong J.T."/>
            <person name="Thompson J."/>
            <person name="Yoakum M."/>
            <person name="Leonard S."/>
            <person name="Pearman C."/>
            <person name="Trani L."/>
            <person name="Radionenko M."/>
            <person name="Waligorski J.E."/>
            <person name="Wang C."/>
            <person name="Rock S.M."/>
            <person name="Tin-Wollam A.-M."/>
            <person name="Maupin R."/>
            <person name="Latreille P."/>
            <person name="Wendl M.C."/>
            <person name="Yang S.-P."/>
            <person name="Pohl C."/>
            <person name="Wallis J.W."/>
            <person name="Spieth J."/>
            <person name="Bieri T.A."/>
            <person name="Berkowicz N."/>
            <person name="Nelson J.O."/>
            <person name="Osborne J."/>
            <person name="Ding L."/>
            <person name="Meyer R."/>
            <person name="Sabo A."/>
            <person name="Shotland Y."/>
            <person name="Sinha P."/>
            <person name="Wohldmann P.E."/>
            <person name="Cook L.L."/>
            <person name="Hickenbotham M.T."/>
            <person name="Eldred J."/>
            <person name="Williams D."/>
            <person name="Jones T.A."/>
            <person name="She X."/>
            <person name="Ciccarelli F.D."/>
            <person name="Izaurralde E."/>
            <person name="Taylor J."/>
            <person name="Schmutz J."/>
            <person name="Myers R.M."/>
            <person name="Cox D.R."/>
            <person name="Huang X."/>
            <person name="McPherson J.D."/>
            <person name="Mardis E.R."/>
            <person name="Clifton S.W."/>
            <person name="Warren W.C."/>
            <person name="Chinwalla A.T."/>
            <person name="Eddy S.R."/>
            <person name="Marra M.A."/>
            <person name="Ovcharenko I."/>
            <person name="Furey T.S."/>
            <person name="Miller W."/>
            <person name="Eichler E.E."/>
            <person name="Bork P."/>
            <person name="Suyama M."/>
            <person name="Torrents D."/>
            <person name="Waterston R.H."/>
            <person name="Wilson R.K."/>
        </authorList>
    </citation>
    <scope>NUCLEOTIDE SEQUENCE [LARGE SCALE GENOMIC DNA]</scope>
</reference>
<reference key="3">
    <citation type="journal article" date="2004" name="Genome Res.">
        <title>The status, quality, and expansion of the NIH full-length cDNA project: the Mammalian Gene Collection (MGC).</title>
        <authorList>
            <consortium name="The MGC Project Team"/>
        </authorList>
    </citation>
    <scope>NUCLEOTIDE SEQUENCE [LARGE SCALE MRNA] (ISOFORM 2)</scope>
    <scope>VARIANT ALA-308</scope>
    <source>
        <tissue>Testis</tissue>
    </source>
</reference>
<gene>
    <name type="primary">NSUN7</name>
</gene>
<protein>
    <recommendedName>
        <fullName>Putative methyltransferase NSUN7</fullName>
        <ecNumber>2.1.1.-</ecNumber>
    </recommendedName>
    <alternativeName>
        <fullName>NOL1/NOP2/Sun domain family member 7</fullName>
    </alternativeName>
</protein>
<keyword id="KW-0025">Alternative splicing</keyword>
<keyword id="KW-0489">Methyltransferase</keyword>
<keyword id="KW-1267">Proteomics identification</keyword>
<keyword id="KW-1185">Reference proteome</keyword>
<keyword id="KW-0694">RNA-binding</keyword>
<keyword id="KW-0949">S-adenosyl-L-methionine</keyword>
<keyword id="KW-0808">Transferase</keyword>